<feature type="chain" id="PRO_0000117942" description="NADH-ubiquinone oxidoreductase chain 4">
    <location>
        <begin position="1"/>
        <end position="459"/>
    </location>
</feature>
<feature type="transmembrane region" description="Helical" evidence="2">
    <location>
        <begin position="22"/>
        <end position="42"/>
    </location>
</feature>
<feature type="transmembrane region" description="Helical" evidence="2">
    <location>
        <begin position="60"/>
        <end position="80"/>
    </location>
</feature>
<feature type="transmembrane region" description="Helical" evidence="2">
    <location>
        <begin position="102"/>
        <end position="122"/>
    </location>
</feature>
<feature type="transmembrane region" description="Helical" evidence="2">
    <location>
        <begin position="145"/>
        <end position="165"/>
    </location>
</feature>
<feature type="transmembrane region" description="Helical" evidence="2">
    <location>
        <begin position="196"/>
        <end position="216"/>
    </location>
</feature>
<feature type="transmembrane region" description="Helical" evidence="2">
    <location>
        <begin position="224"/>
        <end position="244"/>
    </location>
</feature>
<feature type="transmembrane region" description="Helical" evidence="2">
    <location>
        <begin position="257"/>
        <end position="277"/>
    </location>
</feature>
<feature type="transmembrane region" description="Helical" evidence="2">
    <location>
        <begin position="284"/>
        <end position="303"/>
    </location>
</feature>
<feature type="transmembrane region" description="Helical" evidence="2">
    <location>
        <begin position="308"/>
        <end position="330"/>
    </location>
</feature>
<feature type="transmembrane region" description="Helical" evidence="2">
    <location>
        <begin position="351"/>
        <end position="371"/>
    </location>
</feature>
<feature type="transmembrane region" description="Helical" evidence="2">
    <location>
        <begin position="391"/>
        <end position="411"/>
    </location>
</feature>
<feature type="sequence variant" id="VAR_008599" evidence="3 7">
    <original>A</original>
    <variation>P</variation>
    <location>
        <position position="79"/>
    </location>
</feature>
<feature type="sequence variant" id="VAR_004759" description="In MELAS; dbSNP:rs199476113." evidence="5">
    <original>T</original>
    <variation>A</variation>
    <location>
        <position position="109"/>
    </location>
</feature>
<feature type="sequence variant" id="VAR_008600" evidence="7">
    <original>T</original>
    <variation>P</variation>
    <location>
        <position position="109"/>
    </location>
</feature>
<feature type="sequence variant" id="VAR_008601" description="In dbSNP:rs1603223136." evidence="7">
    <original>I</original>
    <variation>T</variation>
    <location>
        <position position="132"/>
    </location>
</feature>
<feature type="sequence variant" id="VAR_008602" evidence="7">
    <original>M</original>
    <variation>T</variation>
    <location>
        <position position="294"/>
    </location>
</feature>
<feature type="sequence variant" id="VAR_008393" description="In LDYT; possible rare primary mutation; decrease in enzyme activity; dbSNP:rs200873900." evidence="13">
    <original>V</original>
    <variation>I</variation>
    <location>
        <position position="313"/>
    </location>
</feature>
<feature type="sequence variant" id="VAR_004760" description="In LHON; primary mutation; almost no vision recovery; most frequent mutation; seems to have no effect on electron transfer activity of the complex in inner mitochondrial membrane preparations; dbSNP:rs199476112." evidence="8 9 11 14">
    <original>R</original>
    <variation>H</variation>
    <location>
        <position position="340"/>
    </location>
</feature>
<feature type="sequence variant" id="VAR_064565" description="Found in a patient with mitochondrial complex I deficiency; uncertain significance; dbSNP:rs879136236." evidence="10">
    <original>T</original>
    <variation>A</variation>
    <location>
        <position position="420"/>
    </location>
</feature>
<feature type="sequence conflict" description="In Ref. 2." evidence="15" ref="2">
    <original>V</original>
    <variation>L</variation>
    <location>
        <position position="230"/>
    </location>
</feature>
<name>NU4M_HUMAN</name>
<gene>
    <name type="primary">MT-ND4</name>
    <name type="synonym">MTND4</name>
    <name type="synonym">NADH4</name>
    <name type="synonym">ND4</name>
</gene>
<reference key="1">
    <citation type="journal article" date="1981" name="Nature">
        <title>Sequence and organization of the human mitochondrial genome.</title>
        <authorList>
            <person name="Anderson S."/>
            <person name="Bankier A.T."/>
            <person name="Barrell B.G."/>
            <person name="de Bruijn M.H.L."/>
            <person name="Coulson A.R."/>
            <person name="Drouin J."/>
            <person name="Eperon I.C."/>
            <person name="Nierlich D.P."/>
            <person name="Roe B.A."/>
            <person name="Sanger F."/>
            <person name="Schreier P.H."/>
            <person name="Smith A.J.H."/>
            <person name="Staden R."/>
            <person name="Young I.G."/>
        </authorList>
    </citation>
    <scope>NUCLEOTIDE SEQUENCE [LARGE SCALE GENOMIC DNA]</scope>
</reference>
<reference key="2">
    <citation type="journal article" date="1992" name="Cancer Res.">
        <title>Differentiation of HT-29 human colonic adenocarcinoma cells correlates with increased expression of mitochondrial RNA: effects of trehalose on cell growth and maturation.</title>
        <authorList>
            <person name="Lu X."/>
            <person name="Walker T."/>
            <person name="Macmanus J.P."/>
            <person name="Seligy V.L."/>
        </authorList>
    </citation>
    <scope>NUCLEOTIDE SEQUENCE [GENOMIC DNA]</scope>
</reference>
<reference key="3">
    <citation type="journal article" date="2002" name="Am. J. Hum. Genet.">
        <title>Mitochondrial genome diversity of native Americans supports a single early entry of founder populations into America.</title>
        <authorList>
            <person name="Silva W.A. Jr."/>
            <person name="Bonatto S.L."/>
            <person name="Holanda A.J."/>
            <person name="Ribeiro-Dos-Santos A.K."/>
            <person name="Paixao B.M."/>
            <person name="Goldman G.H."/>
            <person name="Abe-Sandes K."/>
            <person name="Rodriguez-Delfin L."/>
            <person name="Barbosa M."/>
            <person name="Paco-Larson M.L."/>
            <person name="Petzl-Erler M.L."/>
            <person name="Valente V."/>
            <person name="Santos S.E."/>
            <person name="Zago M.A."/>
        </authorList>
    </citation>
    <scope>NUCLEOTIDE SEQUENCE [GENOMIC DNA]</scope>
    <scope>VARIANT PRO-79</scope>
</reference>
<reference key="4">
    <citation type="journal article" date="2003" name="Mol. Biol. Evol.">
        <title>Lineage-specific selection in human mtDNA: lack of polymorphisms in a segment of MTND5 gene in haplogroup J.</title>
        <authorList>
            <person name="Moilanen J.S."/>
            <person name="Finnila S."/>
            <person name="Majamaa K."/>
        </authorList>
    </citation>
    <scope>NUCLEOTIDE SEQUENCE [GENOMIC DNA]</scope>
</reference>
<reference key="5">
    <citation type="journal article" date="2000" name="Nature">
        <title>Mitochondrial genome variation and the origin of modern humans.</title>
        <authorList>
            <person name="Ingman M."/>
            <person name="Kaessmann H."/>
            <person name="Paeaebo S."/>
            <person name="Gyllensten U."/>
        </authorList>
    </citation>
    <scope>NUCLEOTIDE SEQUENCE [GENOMIC DNA]</scope>
</reference>
<reference key="6">
    <citation type="journal article" date="2003" name="Genome Res.">
        <title>Mitochondrial genome variation and evolutionary history of Australian and New Guinean aborigines.</title>
        <authorList>
            <person name="Ingman M."/>
            <person name="Gyllensten U."/>
        </authorList>
    </citation>
    <scope>NUCLEOTIDE SEQUENCE [GENOMIC DNA]</scope>
</reference>
<reference key="7">
    <citation type="journal article" date="2004" name="Int. J. Legal Med.">
        <title>Single nucleotide polymorphisms over the entire mtDNA genome that increase the power of forensic testing in Caucasians.</title>
        <authorList>
            <person name="Coble M.D."/>
            <person name="Just R.S."/>
            <person name="O'Callaghan J.E."/>
            <person name="Letmanyi I.H."/>
            <person name="Peterson C.T."/>
            <person name="Irwin J.A."/>
            <person name="Parsons T.J."/>
        </authorList>
    </citation>
    <scope>NUCLEOTIDE SEQUENCE [GENOMIC DNA]</scope>
</reference>
<reference key="8">
    <citation type="journal article" date="1982" name="J. Mol. Evol.">
        <title>Mitochondrial DNA sequences of primates: tempo and mode of evolution.</title>
        <authorList>
            <person name="Brown W.M."/>
            <person name="Prager E.M."/>
            <person name="Wang A."/>
            <person name="Wilson A.C."/>
        </authorList>
    </citation>
    <scope>NUCLEOTIDE SEQUENCE [GENOMIC DNA] OF 308-459</scope>
</reference>
<reference key="9">
    <citation type="journal article" date="1985" name="Nature">
        <title>Six unidentified reading frames of human mitochondrial DNA encode components of the respiratory-chain NADH dehydrogenase.</title>
        <authorList>
            <person name="Chomyn A."/>
            <person name="Mariottini P."/>
            <person name="Cleeter M.W.J."/>
            <person name="Ragan C.I."/>
            <person name="Matsuno-Yagi A."/>
            <person name="Hatefi Y."/>
            <person name="Doolittle R.F."/>
            <person name="Attardi G."/>
        </authorList>
    </citation>
    <scope>IDENTIFICATION OF PROTEIN</scope>
</reference>
<reference key="10">
    <citation type="journal article" date="1993" name="EMBO J.">
        <title>Lack of assembly of mitochondrial DNA-encoded subunits of respiratory NADH dehydrogenase and loss of enzyme activity in a human cell mutant lacking the mitochondrial ND4 gene product.</title>
        <authorList>
            <person name="Hofhaus G."/>
            <person name="Attardi G."/>
        </authorList>
    </citation>
    <scope>FUNCTION</scope>
    <scope>CATALYTIC ACTIVITY</scope>
</reference>
<reference key="11">
    <citation type="journal article" date="2003" name="J. Biol. Chem.">
        <title>The subunit composition of the human NADH dehydrogenase obtained by rapid one-step immunopurification.</title>
        <authorList>
            <person name="Murray J."/>
            <person name="Zhang B."/>
            <person name="Taylor S.W."/>
            <person name="Oglesbee D."/>
            <person name="Fahy E."/>
            <person name="Marusich M.F."/>
            <person name="Ghosh S.S."/>
            <person name="Capaldi R.A."/>
        </authorList>
    </citation>
    <scope>IDENTIFICATION IN THE NADH-UBIQUINONE OXIDOREDUCTASE COMPLEX</scope>
    <scope>IDENTIFICATION BY MASS SPECTROMETRY</scope>
</reference>
<reference key="12">
    <citation type="journal article" date="2004" name="Biochem. J.">
        <title>Structural organization of mitochondrial human complex I: role of the ND4 and ND5 mitochondria-encoded subunits and interaction with prohibitin.</title>
        <authorList>
            <person name="Bourges I."/>
            <person name="Ramus C."/>
            <person name="Mousson de Camaret B."/>
            <person name="Beugnot R."/>
            <person name="Remacle C."/>
            <person name="Cardol P."/>
            <person name="Hofhaus G."/>
            <person name="Issartel J.P."/>
        </authorList>
    </citation>
    <scope>FUNCTION</scope>
    <scope>CATALYTIC ACTIVITY</scope>
</reference>
<reference key="13">
    <citation type="journal article" date="2011" name="BMC Syst. Biol.">
        <title>Initial characterization of the human central proteome.</title>
        <authorList>
            <person name="Burkard T.R."/>
            <person name="Planyavsky M."/>
            <person name="Kaupe I."/>
            <person name="Breitwieser F.P."/>
            <person name="Buerckstuemmer T."/>
            <person name="Bennett K.L."/>
            <person name="Superti-Furga G."/>
            <person name="Colinge J."/>
        </authorList>
    </citation>
    <scope>IDENTIFICATION BY MASS SPECTROMETRY [LARGE SCALE ANALYSIS]</scope>
</reference>
<reference key="14">
    <citation type="journal article" date="2015" name="Proteomics">
        <title>N-terminome analysis of the human mitochondrial proteome.</title>
        <authorList>
            <person name="Vaca Jacome A.S."/>
            <person name="Rabilloud T."/>
            <person name="Schaeffer-Reiss C."/>
            <person name="Rompais M."/>
            <person name="Ayoub D."/>
            <person name="Lane L."/>
            <person name="Bairoch A."/>
            <person name="Van Dorsselaer A."/>
            <person name="Carapito C."/>
        </authorList>
    </citation>
    <scope>IDENTIFICATION BY MASS SPECTROMETRY [LARGE SCALE ANALYSIS]</scope>
</reference>
<reference key="15">
    <citation type="journal article" date="1988" name="Science">
        <title>Mitochondrial DNA mutation associated with Leber's hereditary optic neuropathy.</title>
        <authorList>
            <person name="Wallace D.C."/>
            <person name="Singh G."/>
            <person name="Lott M.T."/>
            <person name="Hodge J.A."/>
            <person name="Schurr T.G."/>
            <person name="Lezza A.M."/>
            <person name="Elsas L.J. II"/>
            <person name="Nikoskelainen E.K."/>
        </authorList>
    </citation>
    <scope>VARIANT LHON HIS-340</scope>
</reference>
<reference key="16">
    <citation type="journal article" date="1991" name="FEBS Lett.">
        <title>Electron transfer properties of NADH:ubiquinone reductase in the ND1/3460 and the ND4/11778 mutations of the Leber hereditary optic neuroretinopathy (LHON).</title>
        <authorList>
            <person name="Majander A."/>
            <person name="Huoponen K."/>
            <person name="Savontaus M.-L."/>
            <person name="Nikoskelainen E."/>
            <person name="Wikstroem M."/>
        </authorList>
    </citation>
    <scope>CHARACTERIZATION OF VARIANT LHON HIS-340</scope>
</reference>
<reference key="17">
    <citation type="journal article" date="1991" name="Hum. Genet.">
        <title>Detection of the G to A mitochondrial DNA mutation at position 11778 in German families with Leber's hereditary optic neuropathy.</title>
        <authorList>
            <person name="Kormann B.A."/>
            <person name="Schuster H."/>
            <person name="Berninger T.A."/>
            <person name="Leo-Kottler B."/>
        </authorList>
    </citation>
    <scope>VARIANT LHON HIS-340</scope>
</reference>
<reference key="18">
    <citation type="journal article" date="1991" name="Hum. Genet.">
        <title>Normal variants of human mitochondrial DNA and translation products: the building of a reference data base.</title>
        <authorList>
            <person name="Marzuki S."/>
            <person name="Noer A.S."/>
            <person name="Lertrit P."/>
            <person name="Thyagarajan D."/>
            <person name="Kapsa R."/>
            <person name="Utthanaphol P."/>
            <person name="Byrne E."/>
        </authorList>
    </citation>
    <scope>VARIANTS PRO-79; PRO-109; THR-132 AND THR-294</scope>
</reference>
<reference key="19">
    <citation type="journal article" date="1992" name="Am. J. Hum. Genet.">
        <title>A new disease-related mutation for mitochondrial encephalopathy lactic acidosis and strokelike episodes (MELAS) syndrome affects the ND4 subunit of the respiratory complex I.</title>
        <authorList>
            <person name="Lertrit P."/>
            <person name="Noer A.S."/>
            <person name="Jean-Francois M.J.B."/>
            <person name="Kapsa R."/>
            <person name="Dennett X."/>
            <person name="Thyagarajan D."/>
            <person name="Lethlean K."/>
            <person name="Byrne E."/>
            <person name="Marzuki S."/>
        </authorList>
    </citation>
    <scope>VARIANT MELAS ALA-109</scope>
</reference>
<reference key="20">
    <citation type="journal article" date="1996" name="Am. J. Hum. Genet.">
        <title>Genetic and biochemical impairment of mitochondrial complex I activity in a family with Leber hereditary optic neuropathy and hereditary spastic dystonia.</title>
        <authorList>
            <person name="de Vries D.D."/>
            <person name="Went L.N."/>
            <person name="Bruyn G.W."/>
            <person name="Scholte H.R."/>
            <person name="Hofstra R.M.W."/>
            <person name="Bolhuis P.A."/>
            <person name="van Oost B.A."/>
        </authorList>
    </citation>
    <scope>VARIANT LDYT ILE-313</scope>
    <scope>CHARACTERIZATION OF VARIANT LDYT ILE-313</scope>
    <scope>FUNCTION</scope>
    <scope>CATALYTIC ACTIVITY</scope>
</reference>
<reference key="21">
    <citation type="journal article" date="1998" name="Hum. Mutat. Suppl.">
        <title>Leber's hereditary optic neuropathy in Indonesia: two families with the mtDNA 11778G&gt;A and 14484T&gt;C mutations.</title>
        <authorList>
            <person name="Sudoyo H."/>
            <person name="Sitepu M."/>
            <person name="Malik S."/>
            <person name="Poesponegoro H.D."/>
            <person name="Marzuki S."/>
        </authorList>
    </citation>
    <scope>VARIANT LHON HIS-340</scope>
</reference>
<reference key="22">
    <citation type="journal article" date="2010" name="Nat. Genet.">
        <title>High-throughput, pooled sequencing identifies mutations in NUBPL and FOXRED1 in human complex I deficiency.</title>
        <authorList>
            <person name="Calvo S.E."/>
            <person name="Tucker E.J."/>
            <person name="Compton A.G."/>
            <person name="Kirby D.M."/>
            <person name="Crawford G."/>
            <person name="Burtt N.P."/>
            <person name="Rivas M."/>
            <person name="Guiducci C."/>
            <person name="Bruno D.L."/>
            <person name="Goldberger O.A."/>
            <person name="Redman M.C."/>
            <person name="Wiltshire E."/>
            <person name="Wilson C.J."/>
            <person name="Altshuler D."/>
            <person name="Gabriel S.B."/>
            <person name="Daly M.J."/>
            <person name="Thorburn D.R."/>
            <person name="Mootha V.K."/>
        </authorList>
    </citation>
    <scope>VARIANT ALA-420</scope>
</reference>
<geneLocation type="mitochondrion"/>
<sequence length="459" mass="51581">MLKLIVPTIMLLPLTWLSKKHMIWINTTTHSLIISIIPLLFFNQINNNLFSCSPTFSSDPLTTPLLMLTTWLLPLTIMASQRHLSSEPLSRKKLYLSMLISLQISLIMTFTATELIMFYIFFETTLIPTLAIITRWGNQPERLNAGTYFLFYTLVGSLPLLIALIYTHNTLGSLNILLLTLTAQELSNSWANNLMWLAYTMAFMVKMPLYGLHLWLPKAHVEAPIAGSMVLAAVLLKLGGYGMMRLTLILNPLTKHMAYPFLVLSLWGMIMTSSICLRQTDLKSLIAYSSISHMALVVTAILIQTPWSFTGAVILMIAHGLTSSLLFCLANSNYERTHSRIMILSQGLQTLLPLMAFWWLLASLANLALPPTINLLGELSVLVTTFSWSNITLLLTGLNMLVTALYSLYMFTTTQWGSLTHHINNMKPSFTRENTLMFMHLSPILLLSLNPDIITGFSS</sequence>
<accession>P03905</accession>
<accession>Q6RL39</accession>
<accession>Q6RQN9</accession>
<accession>Q8HNR8</accession>
<dbReference type="EC" id="7.1.1.2" evidence="6 12 13"/>
<dbReference type="EMBL" id="J01415">
    <property type="protein sequence ID" value="AAB58952.1"/>
    <property type="molecule type" value="Genomic_DNA"/>
</dbReference>
<dbReference type="EMBL" id="V00662">
    <property type="protein sequence ID" value="CAA24035.1"/>
    <property type="molecule type" value="Genomic_DNA"/>
</dbReference>
<dbReference type="EMBL" id="AY495090">
    <property type="protein sequence ID" value="AAR92505.1"/>
    <property type="molecule type" value="Genomic_DNA"/>
</dbReference>
<dbReference type="EMBL" id="AY495091">
    <property type="protein sequence ID" value="AAR92518.1"/>
    <property type="molecule type" value="Genomic_DNA"/>
</dbReference>
<dbReference type="EMBL" id="AY495092">
    <property type="protein sequence ID" value="AAR92531.1"/>
    <property type="molecule type" value="Genomic_DNA"/>
</dbReference>
<dbReference type="EMBL" id="AY495093">
    <property type="protein sequence ID" value="AAR92544.1"/>
    <property type="molecule type" value="Genomic_DNA"/>
</dbReference>
<dbReference type="EMBL" id="AY495094">
    <property type="protein sequence ID" value="AAR92557.1"/>
    <property type="molecule type" value="Genomic_DNA"/>
</dbReference>
<dbReference type="EMBL" id="AY495095">
    <property type="protein sequence ID" value="AAR92570.1"/>
    <property type="molecule type" value="Genomic_DNA"/>
</dbReference>
<dbReference type="EMBL" id="AY495096">
    <property type="protein sequence ID" value="AAR92583.1"/>
    <property type="molecule type" value="Genomic_DNA"/>
</dbReference>
<dbReference type="EMBL" id="AY495097">
    <property type="protein sequence ID" value="AAR92596.1"/>
    <property type="molecule type" value="Genomic_DNA"/>
</dbReference>
<dbReference type="EMBL" id="AY495098">
    <property type="protein sequence ID" value="AAR92609.1"/>
    <property type="molecule type" value="Genomic_DNA"/>
</dbReference>
<dbReference type="EMBL" id="AY495099">
    <property type="protein sequence ID" value="AAR92622.1"/>
    <property type="molecule type" value="Genomic_DNA"/>
</dbReference>
<dbReference type="EMBL" id="AY495100">
    <property type="protein sequence ID" value="AAR92635.1"/>
    <property type="molecule type" value="Genomic_DNA"/>
</dbReference>
<dbReference type="EMBL" id="AY495101">
    <property type="protein sequence ID" value="AAR92648.1"/>
    <property type="molecule type" value="Genomic_DNA"/>
</dbReference>
<dbReference type="EMBL" id="AY495102">
    <property type="protein sequence ID" value="AAR92661.1"/>
    <property type="molecule type" value="Genomic_DNA"/>
</dbReference>
<dbReference type="EMBL" id="AY495103">
    <property type="protein sequence ID" value="AAR92674.1"/>
    <property type="molecule type" value="Genomic_DNA"/>
</dbReference>
<dbReference type="EMBL" id="AY495104">
    <property type="protein sequence ID" value="AAR92687.1"/>
    <property type="molecule type" value="Genomic_DNA"/>
</dbReference>
<dbReference type="EMBL" id="AY495106">
    <property type="protein sequence ID" value="AAR92713.1"/>
    <property type="molecule type" value="Genomic_DNA"/>
</dbReference>
<dbReference type="EMBL" id="AY495107">
    <property type="protein sequence ID" value="AAR92726.1"/>
    <property type="molecule type" value="Genomic_DNA"/>
</dbReference>
<dbReference type="EMBL" id="AY495108">
    <property type="protein sequence ID" value="AAR92739.1"/>
    <property type="molecule type" value="Genomic_DNA"/>
</dbReference>
<dbReference type="EMBL" id="AY495109">
    <property type="protein sequence ID" value="AAR92752.1"/>
    <property type="molecule type" value="Genomic_DNA"/>
</dbReference>
<dbReference type="EMBL" id="AY495110">
    <property type="protein sequence ID" value="AAR92765.1"/>
    <property type="molecule type" value="Genomic_DNA"/>
</dbReference>
<dbReference type="EMBL" id="AY495111">
    <property type="protein sequence ID" value="AAR92778.1"/>
    <property type="molecule type" value="Genomic_DNA"/>
</dbReference>
<dbReference type="EMBL" id="AY495112">
    <property type="protein sequence ID" value="AAR92791.1"/>
    <property type="molecule type" value="Genomic_DNA"/>
</dbReference>
<dbReference type="EMBL" id="AY495113">
    <property type="protein sequence ID" value="AAR92804.1"/>
    <property type="molecule type" value="Genomic_DNA"/>
</dbReference>
<dbReference type="EMBL" id="AY495114">
    <property type="protein sequence ID" value="AAR92817.1"/>
    <property type="molecule type" value="Genomic_DNA"/>
</dbReference>
<dbReference type="EMBL" id="AY495115">
    <property type="protein sequence ID" value="AAR92830.1"/>
    <property type="molecule type" value="Genomic_DNA"/>
</dbReference>
<dbReference type="EMBL" id="AY495116">
    <property type="protein sequence ID" value="AAR92843.1"/>
    <property type="molecule type" value="Genomic_DNA"/>
</dbReference>
<dbReference type="EMBL" id="AY495117">
    <property type="protein sequence ID" value="AAR92856.1"/>
    <property type="molecule type" value="Genomic_DNA"/>
</dbReference>
<dbReference type="EMBL" id="AY495118">
    <property type="protein sequence ID" value="AAR92869.1"/>
    <property type="molecule type" value="Genomic_DNA"/>
</dbReference>
<dbReference type="EMBL" id="AY495119">
    <property type="protein sequence ID" value="AAR92882.1"/>
    <property type="molecule type" value="Genomic_DNA"/>
</dbReference>
<dbReference type="EMBL" id="AY495120">
    <property type="protein sequence ID" value="AAR92895.1"/>
    <property type="molecule type" value="Genomic_DNA"/>
</dbReference>
<dbReference type="EMBL" id="AY495121">
    <property type="protein sequence ID" value="AAR92908.1"/>
    <property type="molecule type" value="Genomic_DNA"/>
</dbReference>
<dbReference type="EMBL" id="AY495122">
    <property type="protein sequence ID" value="AAR92921.1"/>
    <property type="molecule type" value="Genomic_DNA"/>
</dbReference>
<dbReference type="EMBL" id="AY495123">
    <property type="protein sequence ID" value="AAR92934.1"/>
    <property type="molecule type" value="Genomic_DNA"/>
</dbReference>
<dbReference type="EMBL" id="AY495124">
    <property type="protein sequence ID" value="AAR92947.1"/>
    <property type="molecule type" value="Genomic_DNA"/>
</dbReference>
<dbReference type="EMBL" id="AY495125">
    <property type="protein sequence ID" value="AAR92960.1"/>
    <property type="molecule type" value="Genomic_DNA"/>
</dbReference>
<dbReference type="EMBL" id="AY495126">
    <property type="protein sequence ID" value="AAR92973.1"/>
    <property type="molecule type" value="Genomic_DNA"/>
</dbReference>
<dbReference type="EMBL" id="AY495127">
    <property type="protein sequence ID" value="AAR92986.1"/>
    <property type="molecule type" value="Genomic_DNA"/>
</dbReference>
<dbReference type="EMBL" id="AY495128">
    <property type="protein sequence ID" value="AAR92999.1"/>
    <property type="molecule type" value="Genomic_DNA"/>
</dbReference>
<dbReference type="EMBL" id="AY495129">
    <property type="protein sequence ID" value="AAR93012.1"/>
    <property type="molecule type" value="Genomic_DNA"/>
</dbReference>
<dbReference type="EMBL" id="AY495130">
    <property type="protein sequence ID" value="AAR93025.1"/>
    <property type="molecule type" value="Genomic_DNA"/>
</dbReference>
<dbReference type="EMBL" id="AY495131">
    <property type="protein sequence ID" value="AAR93038.1"/>
    <property type="molecule type" value="Genomic_DNA"/>
</dbReference>
<dbReference type="EMBL" id="AY495132">
    <property type="protein sequence ID" value="AAR93051.1"/>
    <property type="molecule type" value="Genomic_DNA"/>
</dbReference>
<dbReference type="EMBL" id="AY495133">
    <property type="protein sequence ID" value="AAR93064.1"/>
    <property type="molecule type" value="Genomic_DNA"/>
</dbReference>
<dbReference type="EMBL" id="AY495134">
    <property type="protein sequence ID" value="AAR93077.1"/>
    <property type="molecule type" value="Genomic_DNA"/>
</dbReference>
<dbReference type="EMBL" id="AY495135">
    <property type="protein sequence ID" value="AAR93090.1"/>
    <property type="molecule type" value="Genomic_DNA"/>
</dbReference>
<dbReference type="EMBL" id="AY495136">
    <property type="protein sequence ID" value="AAR93103.1"/>
    <property type="molecule type" value="Genomic_DNA"/>
</dbReference>
<dbReference type="EMBL" id="AY495137">
    <property type="protein sequence ID" value="AAR93116.1"/>
    <property type="molecule type" value="Genomic_DNA"/>
</dbReference>
<dbReference type="EMBL" id="AY495138">
    <property type="protein sequence ID" value="AAR93129.1"/>
    <property type="molecule type" value="Genomic_DNA"/>
</dbReference>
<dbReference type="EMBL" id="AY495139">
    <property type="protein sequence ID" value="AAR93142.1"/>
    <property type="molecule type" value="Genomic_DNA"/>
</dbReference>
<dbReference type="EMBL" id="AY495140">
    <property type="protein sequence ID" value="AAR93155.1"/>
    <property type="molecule type" value="Genomic_DNA"/>
</dbReference>
<dbReference type="EMBL" id="AY495141">
    <property type="protein sequence ID" value="AAR93168.1"/>
    <property type="molecule type" value="Genomic_DNA"/>
</dbReference>
<dbReference type="EMBL" id="AY495142">
    <property type="protein sequence ID" value="AAR93181.1"/>
    <property type="molecule type" value="Genomic_DNA"/>
</dbReference>
<dbReference type="EMBL" id="AY495143">
    <property type="protein sequence ID" value="AAR93194.1"/>
    <property type="molecule type" value="Genomic_DNA"/>
</dbReference>
<dbReference type="EMBL" id="AY495144">
    <property type="protein sequence ID" value="AAR93207.1"/>
    <property type="molecule type" value="Genomic_DNA"/>
</dbReference>
<dbReference type="EMBL" id="AY495145">
    <property type="protein sequence ID" value="AAR93220.1"/>
    <property type="molecule type" value="Genomic_DNA"/>
</dbReference>
<dbReference type="EMBL" id="AY495146">
    <property type="protein sequence ID" value="AAR93233.1"/>
    <property type="molecule type" value="Genomic_DNA"/>
</dbReference>
<dbReference type="EMBL" id="AY495147">
    <property type="protein sequence ID" value="AAR93246.1"/>
    <property type="molecule type" value="Genomic_DNA"/>
</dbReference>
<dbReference type="EMBL" id="AY495148">
    <property type="protein sequence ID" value="AAR93259.1"/>
    <property type="molecule type" value="Genomic_DNA"/>
</dbReference>
<dbReference type="EMBL" id="AY495149">
    <property type="protein sequence ID" value="AAR93272.1"/>
    <property type="molecule type" value="Genomic_DNA"/>
</dbReference>
<dbReference type="EMBL" id="AY495150">
    <property type="protein sequence ID" value="AAR93285.1"/>
    <property type="molecule type" value="Genomic_DNA"/>
</dbReference>
<dbReference type="EMBL" id="AY495151">
    <property type="protein sequence ID" value="AAR93298.1"/>
    <property type="molecule type" value="Genomic_DNA"/>
</dbReference>
<dbReference type="EMBL" id="AY495152">
    <property type="protein sequence ID" value="AAR93311.1"/>
    <property type="molecule type" value="Genomic_DNA"/>
</dbReference>
<dbReference type="EMBL" id="AY495153">
    <property type="protein sequence ID" value="AAR93324.1"/>
    <property type="molecule type" value="Genomic_DNA"/>
</dbReference>
<dbReference type="EMBL" id="AY495154">
    <property type="protein sequence ID" value="AAR93337.1"/>
    <property type="molecule type" value="Genomic_DNA"/>
</dbReference>
<dbReference type="EMBL" id="AY495155">
    <property type="protein sequence ID" value="AAR93350.1"/>
    <property type="molecule type" value="Genomic_DNA"/>
</dbReference>
<dbReference type="EMBL" id="AY495156">
    <property type="protein sequence ID" value="AAR93363.1"/>
    <property type="molecule type" value="Genomic_DNA"/>
</dbReference>
<dbReference type="EMBL" id="AY495157">
    <property type="protein sequence ID" value="AAR93376.1"/>
    <property type="molecule type" value="Genomic_DNA"/>
</dbReference>
<dbReference type="EMBL" id="AY495158">
    <property type="protein sequence ID" value="AAR93389.1"/>
    <property type="molecule type" value="Genomic_DNA"/>
</dbReference>
<dbReference type="EMBL" id="AY495159">
    <property type="protein sequence ID" value="AAR93402.1"/>
    <property type="molecule type" value="Genomic_DNA"/>
</dbReference>
<dbReference type="EMBL" id="AY495160">
    <property type="protein sequence ID" value="AAR93415.1"/>
    <property type="molecule type" value="Genomic_DNA"/>
</dbReference>
<dbReference type="EMBL" id="AY495161">
    <property type="protein sequence ID" value="AAR93428.1"/>
    <property type="molecule type" value="Genomic_DNA"/>
</dbReference>
<dbReference type="EMBL" id="AY495162">
    <property type="protein sequence ID" value="AAR93441.1"/>
    <property type="molecule type" value="Genomic_DNA"/>
</dbReference>
<dbReference type="EMBL" id="AY495163">
    <property type="protein sequence ID" value="AAR93454.1"/>
    <property type="molecule type" value="Genomic_DNA"/>
</dbReference>
<dbReference type="EMBL" id="AY495164">
    <property type="protein sequence ID" value="AAR93467.1"/>
    <property type="molecule type" value="Genomic_DNA"/>
</dbReference>
<dbReference type="EMBL" id="AY495165">
    <property type="protein sequence ID" value="AAR93480.1"/>
    <property type="molecule type" value="Genomic_DNA"/>
</dbReference>
<dbReference type="EMBL" id="AY495167">
    <property type="protein sequence ID" value="AAR93506.1"/>
    <property type="molecule type" value="Genomic_DNA"/>
</dbReference>
<dbReference type="EMBL" id="AY495168">
    <property type="protein sequence ID" value="AAR93519.1"/>
    <property type="molecule type" value="Genomic_DNA"/>
</dbReference>
<dbReference type="EMBL" id="AY495169">
    <property type="protein sequence ID" value="AAR93532.1"/>
    <property type="molecule type" value="Genomic_DNA"/>
</dbReference>
<dbReference type="EMBL" id="AY495171">
    <property type="protein sequence ID" value="AAR93558.1"/>
    <property type="molecule type" value="Genomic_DNA"/>
</dbReference>
<dbReference type="EMBL" id="AY495172">
    <property type="protein sequence ID" value="AAR93571.1"/>
    <property type="molecule type" value="Genomic_DNA"/>
</dbReference>
<dbReference type="EMBL" id="AY495173">
    <property type="protein sequence ID" value="AAR93584.1"/>
    <property type="molecule type" value="Genomic_DNA"/>
</dbReference>
<dbReference type="EMBL" id="AY495174">
    <property type="protein sequence ID" value="AAR93597.1"/>
    <property type="molecule type" value="Genomic_DNA"/>
</dbReference>
<dbReference type="EMBL" id="AY495175">
    <property type="protein sequence ID" value="AAR93610.1"/>
    <property type="molecule type" value="Genomic_DNA"/>
</dbReference>
<dbReference type="EMBL" id="AY495176">
    <property type="protein sequence ID" value="AAR93623.1"/>
    <property type="molecule type" value="Genomic_DNA"/>
</dbReference>
<dbReference type="EMBL" id="AY495177">
    <property type="protein sequence ID" value="AAR93636.1"/>
    <property type="molecule type" value="Genomic_DNA"/>
</dbReference>
<dbReference type="EMBL" id="AY495178">
    <property type="protein sequence ID" value="AAR93649.1"/>
    <property type="molecule type" value="Genomic_DNA"/>
</dbReference>
<dbReference type="EMBL" id="AY495179">
    <property type="protein sequence ID" value="AAR93662.1"/>
    <property type="molecule type" value="Genomic_DNA"/>
</dbReference>
<dbReference type="EMBL" id="AY495180">
    <property type="protein sequence ID" value="AAR93675.1"/>
    <property type="molecule type" value="Genomic_DNA"/>
</dbReference>
<dbReference type="EMBL" id="AY495181">
    <property type="protein sequence ID" value="AAR93688.1"/>
    <property type="molecule type" value="Genomic_DNA"/>
</dbReference>
<dbReference type="EMBL" id="AY495182">
    <property type="protein sequence ID" value="AAR93701.1"/>
    <property type="molecule type" value="Genomic_DNA"/>
</dbReference>
<dbReference type="EMBL" id="AY495183">
    <property type="protein sequence ID" value="AAR93714.1"/>
    <property type="molecule type" value="Genomic_DNA"/>
</dbReference>
<dbReference type="EMBL" id="AY495184">
    <property type="protein sequence ID" value="AAR93727.1"/>
    <property type="molecule type" value="Genomic_DNA"/>
</dbReference>
<dbReference type="EMBL" id="AY495185">
    <property type="protein sequence ID" value="AAR93740.1"/>
    <property type="molecule type" value="Genomic_DNA"/>
</dbReference>
<dbReference type="EMBL" id="AY495186">
    <property type="protein sequence ID" value="AAR93753.1"/>
    <property type="molecule type" value="Genomic_DNA"/>
</dbReference>
<dbReference type="EMBL" id="AY495187">
    <property type="protein sequence ID" value="AAR93766.1"/>
    <property type="molecule type" value="Genomic_DNA"/>
</dbReference>
<dbReference type="EMBL" id="AY495188">
    <property type="protein sequence ID" value="AAR93779.1"/>
    <property type="molecule type" value="Genomic_DNA"/>
</dbReference>
<dbReference type="EMBL" id="AY495189">
    <property type="protein sequence ID" value="AAR93792.1"/>
    <property type="molecule type" value="Genomic_DNA"/>
</dbReference>
<dbReference type="EMBL" id="AY495190">
    <property type="protein sequence ID" value="AAR93805.1"/>
    <property type="molecule type" value="Genomic_DNA"/>
</dbReference>
<dbReference type="EMBL" id="AY495191">
    <property type="protein sequence ID" value="AAR93818.1"/>
    <property type="molecule type" value="Genomic_DNA"/>
</dbReference>
<dbReference type="EMBL" id="AY495192">
    <property type="protein sequence ID" value="AAR93831.1"/>
    <property type="molecule type" value="Genomic_DNA"/>
</dbReference>
<dbReference type="EMBL" id="AY495193">
    <property type="protein sequence ID" value="AAR93844.1"/>
    <property type="molecule type" value="Genomic_DNA"/>
</dbReference>
<dbReference type="EMBL" id="AY495194">
    <property type="protein sequence ID" value="AAR93857.1"/>
    <property type="molecule type" value="Genomic_DNA"/>
</dbReference>
<dbReference type="EMBL" id="AY495239">
    <property type="protein sequence ID" value="AAR94442.1"/>
    <property type="molecule type" value="Genomic_DNA"/>
</dbReference>
<dbReference type="EMBL" id="AY495240">
    <property type="protein sequence ID" value="AAR94455.1"/>
    <property type="molecule type" value="Genomic_DNA"/>
</dbReference>
<dbReference type="EMBL" id="AY495241">
    <property type="protein sequence ID" value="AAR94468.1"/>
    <property type="molecule type" value="Genomic_DNA"/>
</dbReference>
<dbReference type="EMBL" id="AY495242">
    <property type="protein sequence ID" value="AAR94481.1"/>
    <property type="molecule type" value="Genomic_DNA"/>
</dbReference>
<dbReference type="EMBL" id="AY495244">
    <property type="protein sequence ID" value="AAR94507.1"/>
    <property type="molecule type" value="Genomic_DNA"/>
</dbReference>
<dbReference type="EMBL" id="AY495246">
    <property type="protein sequence ID" value="AAR94533.1"/>
    <property type="molecule type" value="Genomic_DNA"/>
</dbReference>
<dbReference type="EMBL" id="AY495247">
    <property type="protein sequence ID" value="AAR94546.1"/>
    <property type="molecule type" value="Genomic_DNA"/>
</dbReference>
<dbReference type="EMBL" id="AY495248">
    <property type="protein sequence ID" value="AAR94559.1"/>
    <property type="molecule type" value="Genomic_DNA"/>
</dbReference>
<dbReference type="EMBL" id="AY495249">
    <property type="protein sequence ID" value="AAR94572.1"/>
    <property type="molecule type" value="Genomic_DNA"/>
</dbReference>
<dbReference type="EMBL" id="AY495252">
    <property type="protein sequence ID" value="AAR94611.1"/>
    <property type="molecule type" value="Genomic_DNA"/>
</dbReference>
<dbReference type="EMBL" id="AY495267">
    <property type="protein sequence ID" value="AAR94806.1"/>
    <property type="molecule type" value="Genomic_DNA"/>
</dbReference>
<dbReference type="EMBL" id="AY495268">
    <property type="protein sequence ID" value="AAR94819.1"/>
    <property type="molecule type" value="Genomic_DNA"/>
</dbReference>
<dbReference type="EMBL" id="AY495269">
    <property type="protein sequence ID" value="AAR94832.1"/>
    <property type="molecule type" value="Genomic_DNA"/>
</dbReference>
<dbReference type="EMBL" id="AY495270">
    <property type="protein sequence ID" value="AAR94845.1"/>
    <property type="molecule type" value="Genomic_DNA"/>
</dbReference>
<dbReference type="EMBL" id="AY495271">
    <property type="protein sequence ID" value="AAR94858.1"/>
    <property type="molecule type" value="Genomic_DNA"/>
</dbReference>
<dbReference type="EMBL" id="AY495272">
    <property type="protein sequence ID" value="AAR94871.1"/>
    <property type="molecule type" value="Genomic_DNA"/>
</dbReference>
<dbReference type="EMBL" id="AY495273">
    <property type="protein sequence ID" value="AAR94884.1"/>
    <property type="molecule type" value="Genomic_DNA"/>
</dbReference>
<dbReference type="EMBL" id="AY495274">
    <property type="protein sequence ID" value="AAR94897.1"/>
    <property type="molecule type" value="Genomic_DNA"/>
</dbReference>
<dbReference type="EMBL" id="AY495275">
    <property type="protein sequence ID" value="AAR94910.1"/>
    <property type="molecule type" value="Genomic_DNA"/>
</dbReference>
<dbReference type="EMBL" id="AY495276">
    <property type="protein sequence ID" value="AAR94923.1"/>
    <property type="molecule type" value="Genomic_DNA"/>
</dbReference>
<dbReference type="EMBL" id="AY495277">
    <property type="protein sequence ID" value="AAR94936.1"/>
    <property type="molecule type" value="Genomic_DNA"/>
</dbReference>
<dbReference type="EMBL" id="AY495278">
    <property type="protein sequence ID" value="AAR94949.1"/>
    <property type="molecule type" value="Genomic_DNA"/>
</dbReference>
<dbReference type="EMBL" id="AY495279">
    <property type="protein sequence ID" value="AAR94962.1"/>
    <property type="molecule type" value="Genomic_DNA"/>
</dbReference>
<dbReference type="EMBL" id="AY495280">
    <property type="protein sequence ID" value="AAR94975.1"/>
    <property type="molecule type" value="Genomic_DNA"/>
</dbReference>
<dbReference type="EMBL" id="AY495281">
    <property type="protein sequence ID" value="AAR94988.1"/>
    <property type="molecule type" value="Genomic_DNA"/>
</dbReference>
<dbReference type="EMBL" id="AY495282">
    <property type="protein sequence ID" value="AAR95001.1"/>
    <property type="molecule type" value="Genomic_DNA"/>
</dbReference>
<dbReference type="EMBL" id="AY495283">
    <property type="protein sequence ID" value="AAR95014.1"/>
    <property type="molecule type" value="Genomic_DNA"/>
</dbReference>
<dbReference type="EMBL" id="AY495284">
    <property type="protein sequence ID" value="AAR95027.1"/>
    <property type="molecule type" value="Genomic_DNA"/>
</dbReference>
<dbReference type="EMBL" id="AY495285">
    <property type="protein sequence ID" value="AAR95040.1"/>
    <property type="molecule type" value="Genomic_DNA"/>
</dbReference>
<dbReference type="EMBL" id="AY495286">
    <property type="protein sequence ID" value="AAR95053.1"/>
    <property type="molecule type" value="Genomic_DNA"/>
</dbReference>
<dbReference type="EMBL" id="AY495287">
    <property type="protein sequence ID" value="AAR95066.1"/>
    <property type="molecule type" value="Genomic_DNA"/>
</dbReference>
<dbReference type="EMBL" id="AY495288">
    <property type="protein sequence ID" value="AAR95079.1"/>
    <property type="molecule type" value="Genomic_DNA"/>
</dbReference>
<dbReference type="EMBL" id="AY495289">
    <property type="protein sequence ID" value="AAR95092.1"/>
    <property type="molecule type" value="Genomic_DNA"/>
</dbReference>
<dbReference type="EMBL" id="AY495290">
    <property type="protein sequence ID" value="AAR95105.1"/>
    <property type="molecule type" value="Genomic_DNA"/>
</dbReference>
<dbReference type="EMBL" id="AY495291">
    <property type="protein sequence ID" value="AAR95118.1"/>
    <property type="molecule type" value="Genomic_DNA"/>
</dbReference>
<dbReference type="EMBL" id="AY495292">
    <property type="protein sequence ID" value="AAR95131.1"/>
    <property type="molecule type" value="Genomic_DNA"/>
</dbReference>
<dbReference type="EMBL" id="AY495293">
    <property type="protein sequence ID" value="AAR95144.1"/>
    <property type="molecule type" value="Genomic_DNA"/>
</dbReference>
<dbReference type="EMBL" id="AY495294">
    <property type="protein sequence ID" value="AAR95157.1"/>
    <property type="molecule type" value="Genomic_DNA"/>
</dbReference>
<dbReference type="EMBL" id="AY495295">
    <property type="protein sequence ID" value="AAR95170.1"/>
    <property type="molecule type" value="Genomic_DNA"/>
</dbReference>
<dbReference type="EMBL" id="AY495297">
    <property type="protein sequence ID" value="AAR95196.1"/>
    <property type="molecule type" value="Genomic_DNA"/>
</dbReference>
<dbReference type="EMBL" id="AY495298">
    <property type="protein sequence ID" value="AAR95209.1"/>
    <property type="molecule type" value="Genomic_DNA"/>
</dbReference>
<dbReference type="EMBL" id="AY495299">
    <property type="protein sequence ID" value="AAR95222.1"/>
    <property type="molecule type" value="Genomic_DNA"/>
</dbReference>
<dbReference type="EMBL" id="AY495300">
    <property type="protein sequence ID" value="AAR95235.1"/>
    <property type="molecule type" value="Genomic_DNA"/>
</dbReference>
<dbReference type="EMBL" id="AY495301">
    <property type="protein sequence ID" value="AAR95248.1"/>
    <property type="molecule type" value="Genomic_DNA"/>
</dbReference>
<dbReference type="EMBL" id="AY495302">
    <property type="protein sequence ID" value="AAR95261.1"/>
    <property type="molecule type" value="Genomic_DNA"/>
</dbReference>
<dbReference type="EMBL" id="AY495303">
    <property type="protein sequence ID" value="AAR95274.1"/>
    <property type="molecule type" value="Genomic_DNA"/>
</dbReference>
<dbReference type="EMBL" id="AY495304">
    <property type="protein sequence ID" value="AAR95287.1"/>
    <property type="molecule type" value="Genomic_DNA"/>
</dbReference>
<dbReference type="EMBL" id="AY495305">
    <property type="protein sequence ID" value="AAR95300.1"/>
    <property type="molecule type" value="Genomic_DNA"/>
</dbReference>
<dbReference type="EMBL" id="AY495306">
    <property type="protein sequence ID" value="AAR95313.1"/>
    <property type="molecule type" value="Genomic_DNA"/>
</dbReference>
<dbReference type="EMBL" id="AY495307">
    <property type="protein sequence ID" value="AAR95326.1"/>
    <property type="molecule type" value="Genomic_DNA"/>
</dbReference>
<dbReference type="EMBL" id="AY495308">
    <property type="protein sequence ID" value="AAR95339.1"/>
    <property type="molecule type" value="Genomic_DNA"/>
</dbReference>
<dbReference type="EMBL" id="AY495309">
    <property type="protein sequence ID" value="AAR95352.1"/>
    <property type="molecule type" value="Genomic_DNA"/>
</dbReference>
<dbReference type="EMBL" id="AY495310">
    <property type="protein sequence ID" value="AAR95365.1"/>
    <property type="molecule type" value="Genomic_DNA"/>
</dbReference>
<dbReference type="EMBL" id="AY495311">
    <property type="protein sequence ID" value="AAR95378.1"/>
    <property type="molecule type" value="Genomic_DNA"/>
</dbReference>
<dbReference type="EMBL" id="AY495312">
    <property type="protein sequence ID" value="AAR95391.1"/>
    <property type="molecule type" value="Genomic_DNA"/>
</dbReference>
<dbReference type="EMBL" id="AY495313">
    <property type="protein sequence ID" value="AAR95404.1"/>
    <property type="molecule type" value="Genomic_DNA"/>
</dbReference>
<dbReference type="EMBL" id="AY495314">
    <property type="protein sequence ID" value="AAR95417.1"/>
    <property type="molecule type" value="Genomic_DNA"/>
</dbReference>
<dbReference type="EMBL" id="AY495315">
    <property type="protein sequence ID" value="AAR95430.1"/>
    <property type="molecule type" value="Genomic_DNA"/>
</dbReference>
<dbReference type="EMBL" id="AY495316">
    <property type="protein sequence ID" value="AAR95443.1"/>
    <property type="molecule type" value="Genomic_DNA"/>
</dbReference>
<dbReference type="EMBL" id="AY495317">
    <property type="protein sequence ID" value="AAR95456.1"/>
    <property type="molecule type" value="Genomic_DNA"/>
</dbReference>
<dbReference type="EMBL" id="AY495318">
    <property type="protein sequence ID" value="AAR95469.1"/>
    <property type="molecule type" value="Genomic_DNA"/>
</dbReference>
<dbReference type="EMBL" id="AY495319">
    <property type="protein sequence ID" value="AAR95482.1"/>
    <property type="molecule type" value="Genomic_DNA"/>
</dbReference>
<dbReference type="EMBL" id="AY495320">
    <property type="protein sequence ID" value="AAR95495.1"/>
    <property type="molecule type" value="Genomic_DNA"/>
</dbReference>
<dbReference type="EMBL" id="AY495321">
    <property type="protein sequence ID" value="AAR95508.1"/>
    <property type="molecule type" value="Genomic_DNA"/>
</dbReference>
<dbReference type="EMBL" id="AY495322">
    <property type="protein sequence ID" value="AAR95521.1"/>
    <property type="molecule type" value="Genomic_DNA"/>
</dbReference>
<dbReference type="EMBL" id="AY495323">
    <property type="protein sequence ID" value="AAR95534.1"/>
    <property type="molecule type" value="Genomic_DNA"/>
</dbReference>
<dbReference type="EMBL" id="AY495324">
    <property type="protein sequence ID" value="AAR95547.1"/>
    <property type="molecule type" value="Genomic_DNA"/>
</dbReference>
<dbReference type="EMBL" id="AY495325">
    <property type="protein sequence ID" value="AAR95560.1"/>
    <property type="molecule type" value="Genomic_DNA"/>
</dbReference>
<dbReference type="EMBL" id="AY495326">
    <property type="protein sequence ID" value="AAR95573.1"/>
    <property type="molecule type" value="Genomic_DNA"/>
</dbReference>
<dbReference type="EMBL" id="AY495327">
    <property type="protein sequence ID" value="AAR95586.1"/>
    <property type="molecule type" value="Genomic_DNA"/>
</dbReference>
<dbReference type="EMBL" id="AY495328">
    <property type="protein sequence ID" value="AAR95599.1"/>
    <property type="molecule type" value="Genomic_DNA"/>
</dbReference>
<dbReference type="EMBL" id="AY495329">
    <property type="protein sequence ID" value="AAR95612.1"/>
    <property type="molecule type" value="Genomic_DNA"/>
</dbReference>
<dbReference type="EMBL" id="AY495330">
    <property type="protein sequence ID" value="AAR95625.1"/>
    <property type="molecule type" value="Genomic_DNA"/>
</dbReference>
<dbReference type="EMBL" id="AF465942">
    <property type="protein sequence ID" value="AAN14556.1"/>
    <property type="molecule type" value="Genomic_DNA"/>
</dbReference>
<dbReference type="EMBL" id="AF346963">
    <property type="protein sequence ID" value="AAK17216.1"/>
    <property type="molecule type" value="Genomic_DNA"/>
</dbReference>
<dbReference type="EMBL" id="AF346964">
    <property type="protein sequence ID" value="AAK17229.2"/>
    <property type="molecule type" value="Genomic_DNA"/>
</dbReference>
<dbReference type="EMBL" id="AF346966">
    <property type="protein sequence ID" value="AAK17255.1"/>
    <property type="molecule type" value="Genomic_DNA"/>
</dbReference>
<dbReference type="EMBL" id="AF346967">
    <property type="protein sequence ID" value="AAK17268.2"/>
    <property type="molecule type" value="Genomic_DNA"/>
</dbReference>
<dbReference type="EMBL" id="AF346968">
    <property type="protein sequence ID" value="AAK17281.2"/>
    <property type="molecule type" value="Genomic_DNA"/>
</dbReference>
<dbReference type="EMBL" id="AF346969">
    <property type="protein sequence ID" value="AAK17294.2"/>
    <property type="molecule type" value="Genomic_DNA"/>
</dbReference>
<dbReference type="EMBL" id="AF346971">
    <property type="protein sequence ID" value="AAK17320.2"/>
    <property type="molecule type" value="Genomic_DNA"/>
</dbReference>
<dbReference type="EMBL" id="AF346974">
    <property type="protein sequence ID" value="AAK17359.2"/>
    <property type="molecule type" value="Genomic_DNA"/>
</dbReference>
<dbReference type="EMBL" id="AF346975">
    <property type="protein sequence ID" value="AAK17372.2"/>
    <property type="molecule type" value="Genomic_DNA"/>
</dbReference>
<dbReference type="EMBL" id="AF346977">
    <property type="protein sequence ID" value="AAK17398.1"/>
    <property type="molecule type" value="Genomic_DNA"/>
</dbReference>
<dbReference type="EMBL" id="AF346978">
    <property type="protein sequence ID" value="AAK17411.1"/>
    <property type="molecule type" value="Genomic_DNA"/>
</dbReference>
<dbReference type="EMBL" id="AF346980">
    <property type="protein sequence ID" value="AAK17437.2"/>
    <property type="molecule type" value="Genomic_DNA"/>
</dbReference>
<dbReference type="EMBL" id="AF346981">
    <property type="protein sequence ID" value="AAK17450.2"/>
    <property type="molecule type" value="Genomic_DNA"/>
</dbReference>
<dbReference type="EMBL" id="AF346982">
    <property type="protein sequence ID" value="AAK17463.1"/>
    <property type="molecule type" value="Genomic_DNA"/>
</dbReference>
<dbReference type="EMBL" id="AF346985">
    <property type="protein sequence ID" value="AAK17502.2"/>
    <property type="molecule type" value="Genomic_DNA"/>
</dbReference>
<dbReference type="EMBL" id="AF346986">
    <property type="protein sequence ID" value="AAK17515.2"/>
    <property type="molecule type" value="Genomic_DNA"/>
</dbReference>
<dbReference type="EMBL" id="AF346987">
    <property type="protein sequence ID" value="AAK17528.2"/>
    <property type="molecule type" value="Genomic_DNA"/>
</dbReference>
<dbReference type="EMBL" id="AF346989">
    <property type="protein sequence ID" value="AAK17554.2"/>
    <property type="molecule type" value="Genomic_DNA"/>
</dbReference>
<dbReference type="EMBL" id="AF346990">
    <property type="protein sequence ID" value="AAK17567.1"/>
    <property type="molecule type" value="Genomic_DNA"/>
</dbReference>
<dbReference type="EMBL" id="AF346993">
    <property type="protein sequence ID" value="AAK17606.2"/>
    <property type="molecule type" value="Genomic_DNA"/>
</dbReference>
<dbReference type="EMBL" id="AF346994">
    <property type="protein sequence ID" value="AAK17619.2"/>
    <property type="molecule type" value="Genomic_DNA"/>
</dbReference>
<dbReference type="EMBL" id="AF346996">
    <property type="protein sequence ID" value="AAK17645.2"/>
    <property type="molecule type" value="Genomic_DNA"/>
</dbReference>
<dbReference type="EMBL" id="AF346997">
    <property type="protein sequence ID" value="AAK17658.2"/>
    <property type="molecule type" value="Genomic_DNA"/>
</dbReference>
<dbReference type="EMBL" id="AF347000">
    <property type="protein sequence ID" value="AAK17697.1"/>
    <property type="molecule type" value="Genomic_DNA"/>
</dbReference>
<dbReference type="EMBL" id="AF347002">
    <property type="protein sequence ID" value="AAK17723.2"/>
    <property type="molecule type" value="Genomic_DNA"/>
</dbReference>
<dbReference type="EMBL" id="AF347003">
    <property type="protein sequence ID" value="AAK17736.2"/>
    <property type="molecule type" value="Genomic_DNA"/>
</dbReference>
<dbReference type="EMBL" id="AF347004">
    <property type="protein sequence ID" value="AAK17749.2"/>
    <property type="molecule type" value="Genomic_DNA"/>
</dbReference>
<dbReference type="EMBL" id="AF347005">
    <property type="protein sequence ID" value="AAK17762.2"/>
    <property type="molecule type" value="Genomic_DNA"/>
</dbReference>
<dbReference type="EMBL" id="AF347006">
    <property type="protein sequence ID" value="AAK17775.2"/>
    <property type="molecule type" value="Genomic_DNA"/>
</dbReference>
<dbReference type="EMBL" id="AF347007">
    <property type="protein sequence ID" value="AAK17788.2"/>
    <property type="molecule type" value="Genomic_DNA"/>
</dbReference>
<dbReference type="EMBL" id="AF347010">
    <property type="protein sequence ID" value="AAK17827.2"/>
    <property type="molecule type" value="Genomic_DNA"/>
</dbReference>
<dbReference type="EMBL" id="AF347011">
    <property type="protein sequence ID" value="AAK17840.2"/>
    <property type="molecule type" value="Genomic_DNA"/>
</dbReference>
<dbReference type="EMBL" id="AF347012">
    <property type="protein sequence ID" value="AAK17853.2"/>
    <property type="molecule type" value="Genomic_DNA"/>
</dbReference>
<dbReference type="EMBL" id="AF347013">
    <property type="protein sequence ID" value="AAK17866.2"/>
    <property type="molecule type" value="Genomic_DNA"/>
</dbReference>
<dbReference type="EMBL" id="AF347014">
    <property type="protein sequence ID" value="AAK17879.2"/>
    <property type="molecule type" value="Genomic_DNA"/>
</dbReference>
<dbReference type="EMBL" id="AF347015">
    <property type="protein sequence ID" value="AAK17892.2"/>
    <property type="molecule type" value="Genomic_DNA"/>
</dbReference>
<dbReference type="EMBL" id="AY289051">
    <property type="protein sequence ID" value="AAP47889.1"/>
    <property type="molecule type" value="Genomic_DNA"/>
</dbReference>
<dbReference type="EMBL" id="AY289052">
    <property type="protein sequence ID" value="AAP47902.1"/>
    <property type="molecule type" value="Genomic_DNA"/>
</dbReference>
<dbReference type="EMBL" id="AY289055">
    <property type="protein sequence ID" value="AAP47941.1"/>
    <property type="molecule type" value="Genomic_DNA"/>
</dbReference>
<dbReference type="EMBL" id="AY289056">
    <property type="protein sequence ID" value="AAP47954.1"/>
    <property type="molecule type" value="Genomic_DNA"/>
</dbReference>
<dbReference type="EMBL" id="AY289058">
    <property type="protein sequence ID" value="AAP47980.1"/>
    <property type="molecule type" value="Genomic_DNA"/>
</dbReference>
<dbReference type="EMBL" id="AY289059">
    <property type="protein sequence ID" value="AAP47993.1"/>
    <property type="molecule type" value="Genomic_DNA"/>
</dbReference>
<dbReference type="EMBL" id="AY289060">
    <property type="protein sequence ID" value="AAP48006.1"/>
    <property type="molecule type" value="Genomic_DNA"/>
</dbReference>
<dbReference type="EMBL" id="AY289061">
    <property type="protein sequence ID" value="AAP48019.1"/>
    <property type="molecule type" value="Genomic_DNA"/>
</dbReference>
<dbReference type="EMBL" id="AY289062">
    <property type="protein sequence ID" value="AAP48032.1"/>
    <property type="molecule type" value="Genomic_DNA"/>
</dbReference>
<dbReference type="EMBL" id="AY289063">
    <property type="protein sequence ID" value="AAP48045.1"/>
    <property type="molecule type" value="Genomic_DNA"/>
</dbReference>
<dbReference type="EMBL" id="AY289065">
    <property type="protein sequence ID" value="AAP48071.1"/>
    <property type="molecule type" value="Genomic_DNA"/>
</dbReference>
<dbReference type="EMBL" id="AY289068">
    <property type="protein sequence ID" value="AAP48110.1"/>
    <property type="molecule type" value="Genomic_DNA"/>
</dbReference>
<dbReference type="EMBL" id="AY289069">
    <property type="protein sequence ID" value="AAP48123.1"/>
    <property type="molecule type" value="Genomic_DNA"/>
</dbReference>
<dbReference type="EMBL" id="AY289070">
    <property type="protein sequence ID" value="AAP48136.1"/>
    <property type="molecule type" value="Genomic_DNA"/>
</dbReference>
<dbReference type="EMBL" id="AY289071">
    <property type="protein sequence ID" value="AAP48149.1"/>
    <property type="molecule type" value="Genomic_DNA"/>
</dbReference>
<dbReference type="EMBL" id="AY289073">
    <property type="protein sequence ID" value="AAP48175.1"/>
    <property type="molecule type" value="Genomic_DNA"/>
</dbReference>
<dbReference type="EMBL" id="AY289074">
    <property type="protein sequence ID" value="AAP48188.1"/>
    <property type="molecule type" value="Genomic_DNA"/>
</dbReference>
<dbReference type="EMBL" id="AY289075">
    <property type="protein sequence ID" value="AAP48201.1"/>
    <property type="molecule type" value="Genomic_DNA"/>
</dbReference>
<dbReference type="EMBL" id="AY289076">
    <property type="protein sequence ID" value="AAP48214.1"/>
    <property type="molecule type" value="Genomic_DNA"/>
</dbReference>
<dbReference type="EMBL" id="AY289077">
    <property type="protein sequence ID" value="AAP48227.1"/>
    <property type="molecule type" value="Genomic_DNA"/>
</dbReference>
<dbReference type="EMBL" id="AY289079">
    <property type="protein sequence ID" value="AAP48253.1"/>
    <property type="molecule type" value="Genomic_DNA"/>
</dbReference>
<dbReference type="EMBL" id="AY289080">
    <property type="protein sequence ID" value="AAP48266.1"/>
    <property type="molecule type" value="Genomic_DNA"/>
</dbReference>
<dbReference type="EMBL" id="AY289081">
    <property type="protein sequence ID" value="AAP48279.1"/>
    <property type="molecule type" value="Genomic_DNA"/>
</dbReference>
<dbReference type="EMBL" id="AY289082">
    <property type="protein sequence ID" value="AAP48292.1"/>
    <property type="molecule type" value="Genomic_DNA"/>
</dbReference>
<dbReference type="EMBL" id="AY289083">
    <property type="protein sequence ID" value="AAP48305.1"/>
    <property type="molecule type" value="Genomic_DNA"/>
</dbReference>
<dbReference type="EMBL" id="AY289084">
    <property type="protein sequence ID" value="AAP48318.1"/>
    <property type="molecule type" value="Genomic_DNA"/>
</dbReference>
<dbReference type="EMBL" id="AY289085">
    <property type="protein sequence ID" value="AAP48331.1"/>
    <property type="molecule type" value="Genomic_DNA"/>
</dbReference>
<dbReference type="EMBL" id="AY289087">
    <property type="protein sequence ID" value="AAP48357.1"/>
    <property type="molecule type" value="Genomic_DNA"/>
</dbReference>
<dbReference type="EMBL" id="AY289088">
    <property type="protein sequence ID" value="AAP48370.1"/>
    <property type="molecule type" value="Genomic_DNA"/>
</dbReference>
<dbReference type="EMBL" id="AY289090">
    <property type="protein sequence ID" value="AAP48396.1"/>
    <property type="molecule type" value="Genomic_DNA"/>
</dbReference>
<dbReference type="EMBL" id="AY289091">
    <property type="protein sequence ID" value="AAP48409.1"/>
    <property type="molecule type" value="Genomic_DNA"/>
</dbReference>
<dbReference type="EMBL" id="AY289092">
    <property type="protein sequence ID" value="AAP48422.1"/>
    <property type="molecule type" value="Genomic_DNA"/>
</dbReference>
<dbReference type="EMBL" id="AY289093">
    <property type="protein sequence ID" value="AAP48434.1"/>
    <property type="molecule type" value="Genomic_DNA"/>
</dbReference>
<dbReference type="EMBL" id="AY289094">
    <property type="protein sequence ID" value="AAP48447.1"/>
    <property type="molecule type" value="Genomic_DNA"/>
</dbReference>
<dbReference type="EMBL" id="AY289095">
    <property type="protein sequence ID" value="AAP48460.1"/>
    <property type="molecule type" value="Genomic_DNA"/>
</dbReference>
<dbReference type="EMBL" id="AY289096">
    <property type="protein sequence ID" value="AAP48473.1"/>
    <property type="molecule type" value="Genomic_DNA"/>
</dbReference>
<dbReference type="EMBL" id="AY289097">
    <property type="protein sequence ID" value="AAP48486.1"/>
    <property type="molecule type" value="Genomic_DNA"/>
</dbReference>
<dbReference type="EMBL" id="AY289098">
    <property type="protein sequence ID" value="AAP48499.1"/>
    <property type="molecule type" value="Genomic_DNA"/>
</dbReference>
<dbReference type="EMBL" id="AY289099">
    <property type="protein sequence ID" value="AAP48512.1"/>
    <property type="molecule type" value="Genomic_DNA"/>
</dbReference>
<dbReference type="EMBL" id="AY289100">
    <property type="protein sequence ID" value="AAP48525.1"/>
    <property type="molecule type" value="Genomic_DNA"/>
</dbReference>
<dbReference type="EMBL" id="AY289101">
    <property type="protein sequence ID" value="AAP48538.1"/>
    <property type="molecule type" value="Genomic_DNA"/>
</dbReference>
<dbReference type="EMBL" id="AY289102">
    <property type="protein sequence ID" value="AAP48551.1"/>
    <property type="molecule type" value="Genomic_DNA"/>
</dbReference>
<dbReference type="PIR" id="A00434">
    <property type="entry name" value="DNHUN4"/>
</dbReference>
<dbReference type="RefSeq" id="YP_003024035.1">
    <property type="nucleotide sequence ID" value="NC_012920.1"/>
</dbReference>
<dbReference type="PDB" id="5XTC">
    <property type="method" value="EM"/>
    <property type="resolution" value="3.70 A"/>
    <property type="chains" value="r=1-459"/>
</dbReference>
<dbReference type="PDB" id="5XTD">
    <property type="method" value="EM"/>
    <property type="resolution" value="3.70 A"/>
    <property type="chains" value="r=1-459"/>
</dbReference>
<dbReference type="PDB" id="5XTH">
    <property type="method" value="EM"/>
    <property type="resolution" value="3.90 A"/>
    <property type="chains" value="r=1-459"/>
</dbReference>
<dbReference type="PDB" id="5XTI">
    <property type="method" value="EM"/>
    <property type="resolution" value="17.40 A"/>
    <property type="chains" value="Br/r=1-459"/>
</dbReference>
<dbReference type="PDBsum" id="5XTC"/>
<dbReference type="PDBsum" id="5XTD"/>
<dbReference type="PDBsum" id="5XTH"/>
<dbReference type="PDBsum" id="5XTI"/>
<dbReference type="SMR" id="P03905"/>
<dbReference type="BioGRID" id="110634">
    <property type="interactions" value="78"/>
</dbReference>
<dbReference type="ComplexPortal" id="CPX-577">
    <property type="entry name" value="Mitochondrial respiratory chain complex I"/>
</dbReference>
<dbReference type="CORUM" id="P03905"/>
<dbReference type="FunCoup" id="P03905">
    <property type="interactions" value="269"/>
</dbReference>
<dbReference type="IntAct" id="P03905">
    <property type="interactions" value="68"/>
</dbReference>
<dbReference type="MINT" id="P03905"/>
<dbReference type="STRING" id="9606.ENSP00000354961"/>
<dbReference type="BindingDB" id="P03905"/>
<dbReference type="ChEMBL" id="CHEMBL4499"/>
<dbReference type="DrugBank" id="DB00157">
    <property type="generic name" value="NADH"/>
</dbReference>
<dbReference type="DrugCentral" id="P03905"/>
<dbReference type="GlyGen" id="P03905">
    <property type="glycosylation" value="1 site, 1 O-linked glycan (1 site)"/>
</dbReference>
<dbReference type="iPTMnet" id="P03905"/>
<dbReference type="PhosphoSitePlus" id="P03905"/>
<dbReference type="SwissPalm" id="P03905"/>
<dbReference type="BioMuta" id="MT-ND4"/>
<dbReference type="DMDM" id="128748"/>
<dbReference type="jPOST" id="P03905"/>
<dbReference type="MassIVE" id="P03905"/>
<dbReference type="PaxDb" id="9606-ENSP00000354961"/>
<dbReference type="PeptideAtlas" id="P03905"/>
<dbReference type="ProteomicsDB" id="51615"/>
<dbReference type="Pumba" id="P03905"/>
<dbReference type="Antibodypedia" id="35362">
    <property type="antibodies" value="28 antibodies from 12 providers"/>
</dbReference>
<dbReference type="DNASU" id="4538"/>
<dbReference type="Ensembl" id="ENST00000361381.2">
    <property type="protein sequence ID" value="ENSP00000354961.2"/>
    <property type="gene ID" value="ENSG00000198886.2"/>
</dbReference>
<dbReference type="GeneID" id="4538"/>
<dbReference type="KEGG" id="hsa:4538"/>
<dbReference type="UCSC" id="uc064xpj.1">
    <property type="organism name" value="human"/>
</dbReference>
<dbReference type="AGR" id="HGNC:7459"/>
<dbReference type="CTD" id="4538"/>
<dbReference type="DisGeNET" id="4538"/>
<dbReference type="GeneCards" id="MT-ND4"/>
<dbReference type="GeneReviews" id="MT-ND4"/>
<dbReference type="HGNC" id="HGNC:7459">
    <property type="gene designation" value="MT-ND4"/>
</dbReference>
<dbReference type="HPA" id="ENSG00000198886">
    <property type="expression patterns" value="Tissue enhanced (heart)"/>
</dbReference>
<dbReference type="MalaCards" id="MT-ND4"/>
<dbReference type="MIM" id="500001">
    <property type="type" value="phenotype"/>
</dbReference>
<dbReference type="MIM" id="516003">
    <property type="type" value="gene"/>
</dbReference>
<dbReference type="MIM" id="535000">
    <property type="type" value="phenotype"/>
</dbReference>
<dbReference type="MIM" id="540000">
    <property type="type" value="phenotype"/>
</dbReference>
<dbReference type="neXtProt" id="NX_P03905"/>
<dbReference type="OpenTargets" id="ENSG00000198886"/>
<dbReference type="Orphanet" id="104">
    <property type="disease" value="Leber hereditary optic neuropathy"/>
</dbReference>
<dbReference type="Orphanet" id="99718">
    <property type="disease" value="Leber plus disease"/>
</dbReference>
<dbReference type="Orphanet" id="550">
    <property type="disease" value="MELAS"/>
</dbReference>
<dbReference type="Orphanet" id="255210">
    <property type="disease" value="Mitochondrial DNA-associated Leigh syndrome"/>
</dbReference>
<dbReference type="Orphanet" id="90641">
    <property type="disease" value="Rare mitochondrial non-syndromic sensorineural deafness"/>
</dbReference>
<dbReference type="PharmGKB" id="PA31263"/>
<dbReference type="VEuPathDB" id="HostDB:ENSG00000198886"/>
<dbReference type="eggNOG" id="KOG4845">
    <property type="taxonomic scope" value="Eukaryota"/>
</dbReference>
<dbReference type="GeneTree" id="ENSGT00730000111316"/>
<dbReference type="HOGENOM" id="CLU_007100_4_0_1"/>
<dbReference type="InParanoid" id="P03905"/>
<dbReference type="OMA" id="ITRWGNQ"/>
<dbReference type="PAN-GO" id="P03905">
    <property type="GO annotations" value="5 GO annotations based on evolutionary models"/>
</dbReference>
<dbReference type="PhylomeDB" id="P03905"/>
<dbReference type="TreeFam" id="TF343520"/>
<dbReference type="BioCyc" id="MetaCyc:HS00033-MONOMER"/>
<dbReference type="PathwayCommons" id="P03905"/>
<dbReference type="Reactome" id="R-HSA-611105">
    <property type="pathway name" value="Respiratory electron transport"/>
</dbReference>
<dbReference type="Reactome" id="R-HSA-6799198">
    <property type="pathway name" value="Complex I biogenesis"/>
</dbReference>
<dbReference type="SignaLink" id="P03905"/>
<dbReference type="SIGNOR" id="P03905"/>
<dbReference type="BioGRID-ORCS" id="4538">
    <property type="hits" value="0 hits in 3 CRISPR screens"/>
</dbReference>
<dbReference type="ChiTaRS" id="ND4">
    <property type="organism name" value="human"/>
</dbReference>
<dbReference type="GeneWiki" id="MT-ND4"/>
<dbReference type="GenomeRNAi" id="4538"/>
<dbReference type="Pharos" id="P03905">
    <property type="development level" value="Tclin"/>
</dbReference>
<dbReference type="PRO" id="PR:P03905"/>
<dbReference type="Proteomes" id="UP000005640">
    <property type="component" value="Mitochondrion MT"/>
</dbReference>
<dbReference type="RNAct" id="P03905">
    <property type="molecule type" value="protein"/>
</dbReference>
<dbReference type="Bgee" id="ENSG00000198886">
    <property type="expression patterns" value="Expressed in right uterine tube and 97 other cell types or tissues"/>
</dbReference>
<dbReference type="ExpressionAtlas" id="P03905">
    <property type="expression patterns" value="baseline and differential"/>
</dbReference>
<dbReference type="GO" id="GO:0005743">
    <property type="term" value="C:mitochondrial inner membrane"/>
    <property type="evidence" value="ECO:0000314"/>
    <property type="project" value="ComplexPortal"/>
</dbReference>
<dbReference type="GO" id="GO:0005739">
    <property type="term" value="C:mitochondrion"/>
    <property type="evidence" value="ECO:0006056"/>
    <property type="project" value="FlyBase"/>
</dbReference>
<dbReference type="GO" id="GO:0045271">
    <property type="term" value="C:respiratory chain complex I"/>
    <property type="evidence" value="ECO:0000314"/>
    <property type="project" value="UniProtKB"/>
</dbReference>
<dbReference type="GO" id="GO:0008137">
    <property type="term" value="F:NADH dehydrogenase (ubiquinone) activity"/>
    <property type="evidence" value="ECO:0000315"/>
    <property type="project" value="UniProtKB"/>
</dbReference>
<dbReference type="GO" id="GO:0048039">
    <property type="term" value="F:ubiquinone binding"/>
    <property type="evidence" value="ECO:0000318"/>
    <property type="project" value="GO_Central"/>
</dbReference>
<dbReference type="GO" id="GO:0009060">
    <property type="term" value="P:aerobic respiration"/>
    <property type="evidence" value="ECO:0000318"/>
    <property type="project" value="GO_Central"/>
</dbReference>
<dbReference type="GO" id="GO:0021549">
    <property type="term" value="P:cerebellum development"/>
    <property type="evidence" value="ECO:0007669"/>
    <property type="project" value="Ensembl"/>
</dbReference>
<dbReference type="GO" id="GO:0015990">
    <property type="term" value="P:electron transport coupled proton transport"/>
    <property type="evidence" value="ECO:0000318"/>
    <property type="project" value="GO_Central"/>
</dbReference>
<dbReference type="GO" id="GO:0001701">
    <property type="term" value="P:in utero embryonic development"/>
    <property type="evidence" value="ECO:0007669"/>
    <property type="project" value="Ensembl"/>
</dbReference>
<dbReference type="GO" id="GO:0006120">
    <property type="term" value="P:mitochondrial electron transport, NADH to ubiquinone"/>
    <property type="evidence" value="ECO:0000315"/>
    <property type="project" value="UniProtKB"/>
</dbReference>
<dbReference type="GO" id="GO:0032981">
    <property type="term" value="P:mitochondrial respiratory chain complex I assembly"/>
    <property type="evidence" value="ECO:0000315"/>
    <property type="project" value="UniProtKB"/>
</dbReference>
<dbReference type="GO" id="GO:0042776">
    <property type="term" value="P:proton motive force-driven mitochondrial ATP synthesis"/>
    <property type="evidence" value="ECO:0000303"/>
    <property type="project" value="ComplexPortal"/>
</dbReference>
<dbReference type="GO" id="GO:0045471">
    <property type="term" value="P:response to ethanol"/>
    <property type="evidence" value="ECO:0007669"/>
    <property type="project" value="Ensembl"/>
</dbReference>
<dbReference type="GO" id="GO:0001666">
    <property type="term" value="P:response to hypoxia"/>
    <property type="evidence" value="ECO:0007669"/>
    <property type="project" value="Ensembl"/>
</dbReference>
<dbReference type="GO" id="GO:0035094">
    <property type="term" value="P:response to nicotine"/>
    <property type="evidence" value="ECO:0007669"/>
    <property type="project" value="Ensembl"/>
</dbReference>
<dbReference type="InterPro" id="IPR000260">
    <property type="entry name" value="NADH4_N"/>
</dbReference>
<dbReference type="InterPro" id="IPR010227">
    <property type="entry name" value="NADH_Q_OxRdtase_chainM/4"/>
</dbReference>
<dbReference type="InterPro" id="IPR003918">
    <property type="entry name" value="NADH_UbQ_OxRdtase"/>
</dbReference>
<dbReference type="InterPro" id="IPR001750">
    <property type="entry name" value="ND/Mrp_TM"/>
</dbReference>
<dbReference type="NCBIfam" id="TIGR01972">
    <property type="entry name" value="NDH_I_M"/>
    <property type="match status" value="1"/>
</dbReference>
<dbReference type="PANTHER" id="PTHR43507">
    <property type="entry name" value="NADH-UBIQUINONE OXIDOREDUCTASE CHAIN 4"/>
    <property type="match status" value="1"/>
</dbReference>
<dbReference type="PANTHER" id="PTHR43507:SF20">
    <property type="entry name" value="NADH-UBIQUINONE OXIDOREDUCTASE CHAIN 4"/>
    <property type="match status" value="1"/>
</dbReference>
<dbReference type="Pfam" id="PF01059">
    <property type="entry name" value="Oxidored_q5_N"/>
    <property type="match status" value="1"/>
</dbReference>
<dbReference type="Pfam" id="PF00361">
    <property type="entry name" value="Proton_antipo_M"/>
    <property type="match status" value="1"/>
</dbReference>
<dbReference type="PRINTS" id="PR01437">
    <property type="entry name" value="NUOXDRDTASE4"/>
</dbReference>
<proteinExistence type="evidence at protein level"/>
<evidence type="ECO:0000250" key="1">
    <source>
        <dbReference type="UniProtKB" id="P03910"/>
    </source>
</evidence>
<evidence type="ECO:0000255" key="2"/>
<evidence type="ECO:0000269" key="3">
    <source>
    </source>
</evidence>
<evidence type="ECO:0000269" key="4">
    <source>
    </source>
</evidence>
<evidence type="ECO:0000269" key="5">
    <source>
    </source>
</evidence>
<evidence type="ECO:0000269" key="6">
    <source>
    </source>
</evidence>
<evidence type="ECO:0000269" key="7">
    <source>
    </source>
</evidence>
<evidence type="ECO:0000269" key="8">
    <source>
    </source>
</evidence>
<evidence type="ECO:0000269" key="9">
    <source>
    </source>
</evidence>
<evidence type="ECO:0000269" key="10">
    <source>
    </source>
</evidence>
<evidence type="ECO:0000269" key="11">
    <source>
    </source>
</evidence>
<evidence type="ECO:0000269" key="12">
    <source>
    </source>
</evidence>
<evidence type="ECO:0000269" key="13">
    <source>
    </source>
</evidence>
<evidence type="ECO:0000269" key="14">
    <source>
    </source>
</evidence>
<evidence type="ECO:0000305" key="15"/>
<protein>
    <recommendedName>
        <fullName>NADH-ubiquinone oxidoreductase chain 4</fullName>
        <ecNumber evidence="6 12 13">7.1.1.2</ecNumber>
    </recommendedName>
    <alternativeName>
        <fullName>NADH dehydrogenase subunit 4</fullName>
    </alternativeName>
</protein>
<keyword id="KW-0002">3D-structure</keyword>
<keyword id="KW-0225">Disease variant</keyword>
<keyword id="KW-1023">Dystonia</keyword>
<keyword id="KW-0249">Electron transport</keyword>
<keyword id="KW-0429">Leber hereditary optic neuropathy</keyword>
<keyword id="KW-0867">MELAS syndrome</keyword>
<keyword id="KW-0472">Membrane</keyword>
<keyword id="KW-0496">Mitochondrion</keyword>
<keyword id="KW-0999">Mitochondrion inner membrane</keyword>
<keyword id="KW-0520">NAD</keyword>
<keyword id="KW-1274">Primary mitochondrial disease</keyword>
<keyword id="KW-1267">Proteomics identification</keyword>
<keyword id="KW-1185">Reference proteome</keyword>
<keyword id="KW-0679">Respiratory chain</keyword>
<keyword id="KW-1278">Translocase</keyword>
<keyword id="KW-0812">Transmembrane</keyword>
<keyword id="KW-1133">Transmembrane helix</keyword>
<keyword id="KW-0813">Transport</keyword>
<keyword id="KW-0830">Ubiquinone</keyword>
<comment type="function">
    <text evidence="6 12 13">Core subunit of the mitochondrial membrane respiratory chain NADH dehydrogenase (Complex I) which catalyzes electron transfer from NADH through the respiratory chain, using ubiquinone as an electron acceptor (PubMed:15250827, PubMed:8344246, PubMed:8644732). Essential for the catalytic activity and assembly of complex I (PubMed:15250827, PubMed:8344246, PubMed:8644732).</text>
</comment>
<comment type="catalytic activity">
    <reaction evidence="6 12 13">
        <text>a ubiquinone + NADH + 5 H(+)(in) = a ubiquinol + NAD(+) + 4 H(+)(out)</text>
        <dbReference type="Rhea" id="RHEA:29091"/>
        <dbReference type="Rhea" id="RHEA-COMP:9565"/>
        <dbReference type="Rhea" id="RHEA-COMP:9566"/>
        <dbReference type="ChEBI" id="CHEBI:15378"/>
        <dbReference type="ChEBI" id="CHEBI:16389"/>
        <dbReference type="ChEBI" id="CHEBI:17976"/>
        <dbReference type="ChEBI" id="CHEBI:57540"/>
        <dbReference type="ChEBI" id="CHEBI:57945"/>
        <dbReference type="EC" id="7.1.1.2"/>
    </reaction>
</comment>
<comment type="subunit">
    <text evidence="4">Core subunit of respiratory chain NADH dehydrogenase (Complex I) which is composed of 45 different subunits.</text>
</comment>
<comment type="subcellular location">
    <subcellularLocation>
        <location evidence="1">Mitochondrion inner membrane</location>
        <topology evidence="2">Multi-pass membrane protein</topology>
    </subcellularLocation>
</comment>
<comment type="disease" evidence="8 9 11 14">
    <disease id="DI-00640">
        <name>Leber hereditary optic neuropathy</name>
        <acronym>LHON</acronym>
        <description>A maternally inherited form of Leber hereditary optic neuropathy, a mitochondrial disease resulting in bilateral painless loss of central vision due to selective degeneration of the retinal ganglion cells and their axons. The disorder shows incomplete penetrance and male predominance. Cardiac conduction defects and neurological defects have also been described in some LHON patients. LHON results from primary mitochondrial DNA mutations affecting the respiratory chain complexes.</description>
        <dbReference type="MIM" id="535000"/>
    </disease>
    <text>The disease is caused by variants affecting the gene represented in this entry.</text>
</comment>
<comment type="disease" evidence="13">
    <disease id="DI-00641">
        <name>Leber hereditary optic neuropathy with dystonia</name>
        <acronym>LDYT</acronym>
        <description>A form of Leber hereditary optic neuropathy, a mitochondrial disease resulting in bilateral painless loss of central vision due to selective degeneration of the retinal ganglion cells and their axons. The disorder shows incomplete penetrance and male predominance. LDYT is characterized by the association of optic atrophy and central vision loss with dystonia.</description>
        <dbReference type="MIM" id="500001"/>
    </disease>
    <text>The disease is caused by variants affecting the gene represented in this entry.</text>
</comment>
<comment type="disease" evidence="5">
    <disease id="DI-01983">
        <name>Mitochondrial encephalomyopathy with lactic acidosis and stroke-like episodes syndrome</name>
        <acronym>MELAS</acronym>
        <description>Genetically heterogeneous disorder, characterized by episodic vomiting, seizures, and recurrent cerebral insults resembling strokes and causing hemiparesis, hemianopsia, or cortical blindness.</description>
        <dbReference type="MIM" id="540000"/>
    </disease>
    <text>The disease is caused by variants affecting the gene represented in this entry.</text>
</comment>
<comment type="similarity">
    <text evidence="15">Belongs to the complex I subunit 4 family.</text>
</comment>
<organism>
    <name type="scientific">Homo sapiens</name>
    <name type="common">Human</name>
    <dbReference type="NCBI Taxonomy" id="9606"/>
    <lineage>
        <taxon>Eukaryota</taxon>
        <taxon>Metazoa</taxon>
        <taxon>Chordata</taxon>
        <taxon>Craniata</taxon>
        <taxon>Vertebrata</taxon>
        <taxon>Euteleostomi</taxon>
        <taxon>Mammalia</taxon>
        <taxon>Eutheria</taxon>
        <taxon>Euarchontoglires</taxon>
        <taxon>Primates</taxon>
        <taxon>Haplorrhini</taxon>
        <taxon>Catarrhini</taxon>
        <taxon>Hominidae</taxon>
        <taxon>Homo</taxon>
    </lineage>
</organism>